<protein>
    <recommendedName>
        <fullName evidence="1">Glucose-6-phosphate isomerase</fullName>
        <shortName evidence="1">GPI</shortName>
        <ecNumber evidence="1">5.3.1.9</ecNumber>
    </recommendedName>
    <alternativeName>
        <fullName evidence="1">Phosphoglucose isomerase</fullName>
        <shortName evidence="1">PGI</shortName>
    </alternativeName>
    <alternativeName>
        <fullName evidence="1">Phosphohexose isomerase</fullName>
        <shortName evidence="1">PHI</shortName>
    </alternativeName>
</protein>
<reference key="1">
    <citation type="journal article" date="2002" name="Proc. Natl. Acad. Sci. U.S.A.">
        <title>The genome sequence of Bifidobacterium longum reflects its adaptation to the human gastrointestinal tract.</title>
        <authorList>
            <person name="Schell M.A."/>
            <person name="Karmirantzou M."/>
            <person name="Snel B."/>
            <person name="Vilanova D."/>
            <person name="Berger B."/>
            <person name="Pessi G."/>
            <person name="Zwahlen M.-C."/>
            <person name="Desiere F."/>
            <person name="Bork P."/>
            <person name="Delley M."/>
            <person name="Pridmore R.D."/>
            <person name="Arigoni F."/>
        </authorList>
    </citation>
    <scope>NUCLEOTIDE SEQUENCE [LARGE SCALE GENOMIC DNA]</scope>
    <source>
        <strain>NCC 2705</strain>
    </source>
</reference>
<evidence type="ECO:0000255" key="1">
    <source>
        <dbReference type="HAMAP-Rule" id="MF_00473"/>
    </source>
</evidence>
<feature type="chain" id="PRO_0000180600" description="Glucose-6-phosphate isomerase">
    <location>
        <begin position="1"/>
        <end position="566"/>
    </location>
</feature>
<feature type="active site" description="Proton donor" evidence="1">
    <location>
        <position position="374"/>
    </location>
</feature>
<feature type="active site" evidence="1">
    <location>
        <position position="405"/>
    </location>
</feature>
<feature type="active site" evidence="1">
    <location>
        <position position="529"/>
    </location>
</feature>
<keyword id="KW-0963">Cytoplasm</keyword>
<keyword id="KW-0312">Gluconeogenesis</keyword>
<keyword id="KW-0324">Glycolysis</keyword>
<keyword id="KW-0413">Isomerase</keyword>
<keyword id="KW-1185">Reference proteome</keyword>
<gene>
    <name evidence="1" type="primary">pgi</name>
    <name type="synonym">gpi</name>
    <name type="ordered locus">BL0279</name>
</gene>
<proteinExistence type="inferred from homology"/>
<dbReference type="EC" id="5.3.1.9" evidence="1"/>
<dbReference type="EMBL" id="AE014295">
    <property type="protein sequence ID" value="AAN24120.1"/>
    <property type="molecule type" value="Genomic_DNA"/>
</dbReference>
<dbReference type="RefSeq" id="NP_695484.1">
    <property type="nucleotide sequence ID" value="NC_004307.2"/>
</dbReference>
<dbReference type="RefSeq" id="WP_011068403.1">
    <property type="nucleotide sequence ID" value="NC_004307.2"/>
</dbReference>
<dbReference type="SMR" id="Q8G7I6"/>
<dbReference type="STRING" id="206672.BL0279"/>
<dbReference type="EnsemblBacteria" id="AAN24120">
    <property type="protein sequence ID" value="AAN24120"/>
    <property type="gene ID" value="BL0279"/>
</dbReference>
<dbReference type="KEGG" id="blo:BL0279"/>
<dbReference type="PATRIC" id="fig|206672.9.peg.1016"/>
<dbReference type="HOGENOM" id="CLU_017947_3_1_11"/>
<dbReference type="OrthoDB" id="140919at2"/>
<dbReference type="PhylomeDB" id="Q8G7I6"/>
<dbReference type="UniPathway" id="UPA00109">
    <property type="reaction ID" value="UER00181"/>
</dbReference>
<dbReference type="UniPathway" id="UPA00138"/>
<dbReference type="Proteomes" id="UP000000439">
    <property type="component" value="Chromosome"/>
</dbReference>
<dbReference type="GO" id="GO:0005829">
    <property type="term" value="C:cytosol"/>
    <property type="evidence" value="ECO:0007669"/>
    <property type="project" value="TreeGrafter"/>
</dbReference>
<dbReference type="GO" id="GO:0097367">
    <property type="term" value="F:carbohydrate derivative binding"/>
    <property type="evidence" value="ECO:0007669"/>
    <property type="project" value="InterPro"/>
</dbReference>
<dbReference type="GO" id="GO:0004347">
    <property type="term" value="F:glucose-6-phosphate isomerase activity"/>
    <property type="evidence" value="ECO:0007669"/>
    <property type="project" value="UniProtKB-UniRule"/>
</dbReference>
<dbReference type="GO" id="GO:0048029">
    <property type="term" value="F:monosaccharide binding"/>
    <property type="evidence" value="ECO:0007669"/>
    <property type="project" value="TreeGrafter"/>
</dbReference>
<dbReference type="GO" id="GO:0006094">
    <property type="term" value="P:gluconeogenesis"/>
    <property type="evidence" value="ECO:0007669"/>
    <property type="project" value="UniProtKB-UniRule"/>
</dbReference>
<dbReference type="GO" id="GO:0051156">
    <property type="term" value="P:glucose 6-phosphate metabolic process"/>
    <property type="evidence" value="ECO:0007669"/>
    <property type="project" value="TreeGrafter"/>
</dbReference>
<dbReference type="GO" id="GO:0006096">
    <property type="term" value="P:glycolytic process"/>
    <property type="evidence" value="ECO:0007669"/>
    <property type="project" value="UniProtKB-UniRule"/>
</dbReference>
<dbReference type="CDD" id="cd05015">
    <property type="entry name" value="SIS_PGI_1"/>
    <property type="match status" value="1"/>
</dbReference>
<dbReference type="CDD" id="cd05016">
    <property type="entry name" value="SIS_PGI_2"/>
    <property type="match status" value="1"/>
</dbReference>
<dbReference type="FunFam" id="3.40.50.10490:FF:000018">
    <property type="entry name" value="Glucose-6-phosphate isomerase"/>
    <property type="match status" value="1"/>
</dbReference>
<dbReference type="Gene3D" id="1.10.1390.10">
    <property type="match status" value="1"/>
</dbReference>
<dbReference type="Gene3D" id="3.40.50.10490">
    <property type="entry name" value="Glucose-6-phosphate isomerase like protein, domain 1"/>
    <property type="match status" value="2"/>
</dbReference>
<dbReference type="HAMAP" id="MF_00473">
    <property type="entry name" value="G6P_isomerase"/>
    <property type="match status" value="1"/>
</dbReference>
<dbReference type="InterPro" id="IPR001672">
    <property type="entry name" value="G6P_Isomerase"/>
</dbReference>
<dbReference type="InterPro" id="IPR023096">
    <property type="entry name" value="G6P_Isomerase_C"/>
</dbReference>
<dbReference type="InterPro" id="IPR018189">
    <property type="entry name" value="Phosphoglucose_isomerase_CS"/>
</dbReference>
<dbReference type="InterPro" id="IPR046348">
    <property type="entry name" value="SIS_dom_sf"/>
</dbReference>
<dbReference type="InterPro" id="IPR035476">
    <property type="entry name" value="SIS_PGI_1"/>
</dbReference>
<dbReference type="InterPro" id="IPR035482">
    <property type="entry name" value="SIS_PGI_2"/>
</dbReference>
<dbReference type="NCBIfam" id="NF001211">
    <property type="entry name" value="PRK00179.1"/>
    <property type="match status" value="1"/>
</dbReference>
<dbReference type="PANTHER" id="PTHR11469">
    <property type="entry name" value="GLUCOSE-6-PHOSPHATE ISOMERASE"/>
    <property type="match status" value="1"/>
</dbReference>
<dbReference type="PANTHER" id="PTHR11469:SF1">
    <property type="entry name" value="GLUCOSE-6-PHOSPHATE ISOMERASE"/>
    <property type="match status" value="1"/>
</dbReference>
<dbReference type="Pfam" id="PF00342">
    <property type="entry name" value="PGI"/>
    <property type="match status" value="1"/>
</dbReference>
<dbReference type="PRINTS" id="PR00662">
    <property type="entry name" value="G6PISOMERASE"/>
</dbReference>
<dbReference type="SUPFAM" id="SSF53697">
    <property type="entry name" value="SIS domain"/>
    <property type="match status" value="1"/>
</dbReference>
<dbReference type="PROSITE" id="PS00765">
    <property type="entry name" value="P_GLUCOSE_ISOMERASE_1"/>
    <property type="match status" value="1"/>
</dbReference>
<dbReference type="PROSITE" id="PS00174">
    <property type="entry name" value="P_GLUCOSE_ISOMERASE_2"/>
    <property type="match status" value="1"/>
</dbReference>
<dbReference type="PROSITE" id="PS51463">
    <property type="entry name" value="P_GLUCOSE_ISOMERASE_3"/>
    <property type="match status" value="1"/>
</dbReference>
<comment type="function">
    <text evidence="1">Catalyzes the reversible isomerization of glucose-6-phosphate to fructose-6-phosphate.</text>
</comment>
<comment type="catalytic activity">
    <reaction evidence="1">
        <text>alpha-D-glucose 6-phosphate = beta-D-fructose 6-phosphate</text>
        <dbReference type="Rhea" id="RHEA:11816"/>
        <dbReference type="ChEBI" id="CHEBI:57634"/>
        <dbReference type="ChEBI" id="CHEBI:58225"/>
        <dbReference type="EC" id="5.3.1.9"/>
    </reaction>
</comment>
<comment type="pathway">
    <text evidence="1">Carbohydrate biosynthesis; gluconeogenesis.</text>
</comment>
<comment type="pathway">
    <text evidence="1">Carbohydrate degradation; glycolysis; D-glyceraldehyde 3-phosphate and glycerone phosphate from D-glucose: step 2/4.</text>
</comment>
<comment type="subcellular location">
    <subcellularLocation>
        <location evidence="1">Cytoplasm</location>
    </subcellularLocation>
</comment>
<comment type="similarity">
    <text evidence="1">Belongs to the GPI family.</text>
</comment>
<organism>
    <name type="scientific">Bifidobacterium longum (strain NCC 2705)</name>
    <dbReference type="NCBI Taxonomy" id="206672"/>
    <lineage>
        <taxon>Bacteria</taxon>
        <taxon>Bacillati</taxon>
        <taxon>Actinomycetota</taxon>
        <taxon>Actinomycetes</taxon>
        <taxon>Bifidobacteriales</taxon>
        <taxon>Bifidobacteriaceae</taxon>
        <taxon>Bifidobacterium</taxon>
    </lineage>
</organism>
<sequence length="566" mass="62998">MAINPPVDATQTPEWAALQKHYDELQVEGVSLKKWFAEDAERVEKLSFDAGDLHFDLSKNLIKPETLQLFANLAKAVKLDERTKAMYTGVHINNTEDRAVLHTALRRPVEDEGKYIVDGQDTVKDVRETLDKIYAFADDVRSGKWTGVTGRKIETVVNIGIGGSDLGPVMVYEALKPYADAGISARYISNIDPNDLAEKTKGLDPETTLFIIVSKTFTTLETLTNAREARTWLLEELTANGAIAEGDEAQKAEAIKKHFVAVSTNLEKVEEFGIDPNNAFGFWNWVGGRYSVDSAVGTSLAVVFGPARFEEFLHGFHEIDEYFANTPFEKNVVVLLGMLNVWYRNFFKVASHAVLPYDQYLHRFPAYLQQLTMESNGKSVRWDGTPVTSETGEIFWGEPGTNGQHAFYQLIHQGTQLIPADFIAFVNTPNPTKDGDQDVHELFLGNYFAQTKALAFGKTADEVRAEGTPEEIVPARVFSGNRPTTSIFGVALTPFALGELIALYEHITFVEGTVWGLDSYDQWGVELGKQLAKQITPAISQDDDALAAQDASTQSLIKFYRANREF</sequence>
<accession>Q8G7I6</accession>
<name>G6PI_BIFLO</name>